<protein>
    <recommendedName>
        <fullName evidence="4 5">Antimicrobial peptide Meucin-18</fullName>
    </recommendedName>
    <alternativeName>
        <fullName>Venom antimicrobial peptide-9</fullName>
    </alternativeName>
</protein>
<feature type="signal peptide" evidence="1">
    <location>
        <begin position="1"/>
        <end position="16"/>
    </location>
</feature>
<feature type="peptide" id="PRO_0000418793" description="Antimicrobial peptide Meucin-18" evidence="7">
    <location>
        <begin position="17"/>
        <end position="34"/>
    </location>
</feature>
<feature type="propeptide" id="PRO_0000418794" evidence="8">
    <location>
        <begin position="38"/>
        <end position="69"/>
    </location>
</feature>
<dbReference type="EMBL" id="EF445092">
    <property type="protein sequence ID" value="ABR21067.1"/>
    <property type="molecule type" value="mRNA"/>
</dbReference>
<dbReference type="SMR" id="E4VP50"/>
<dbReference type="GO" id="GO:0005576">
    <property type="term" value="C:extracellular region"/>
    <property type="evidence" value="ECO:0007669"/>
    <property type="project" value="UniProtKB-SubCell"/>
</dbReference>
<dbReference type="GO" id="GO:0016020">
    <property type="term" value="C:membrane"/>
    <property type="evidence" value="ECO:0007669"/>
    <property type="project" value="UniProtKB-KW"/>
</dbReference>
<dbReference type="GO" id="GO:0044218">
    <property type="term" value="C:other organism cell membrane"/>
    <property type="evidence" value="ECO:0007669"/>
    <property type="project" value="UniProtKB-KW"/>
</dbReference>
<dbReference type="GO" id="GO:0042742">
    <property type="term" value="P:defense response to bacterium"/>
    <property type="evidence" value="ECO:0007669"/>
    <property type="project" value="UniProtKB-KW"/>
</dbReference>
<dbReference type="GO" id="GO:0050832">
    <property type="term" value="P:defense response to fungus"/>
    <property type="evidence" value="ECO:0007669"/>
    <property type="project" value="UniProtKB-KW"/>
</dbReference>
<dbReference type="GO" id="GO:0031640">
    <property type="term" value="P:killing of cells of another organism"/>
    <property type="evidence" value="ECO:0007669"/>
    <property type="project" value="UniProtKB-KW"/>
</dbReference>
<keyword id="KW-0027">Amidation</keyword>
<keyword id="KW-0044">Antibiotic</keyword>
<keyword id="KW-0929">Antimicrobial</keyword>
<keyword id="KW-0165">Cleavage on pair of basic residues</keyword>
<keyword id="KW-0204">Cytolysis</keyword>
<keyword id="KW-0295">Fungicide</keyword>
<keyword id="KW-0354">Hemolysis</keyword>
<keyword id="KW-0472">Membrane</keyword>
<keyword id="KW-0964">Secreted</keyword>
<keyword id="KW-0732">Signal</keyword>
<keyword id="KW-1052">Target cell membrane</keyword>
<keyword id="KW-1053">Target membrane</keyword>
<accession>E4VP50</accession>
<evidence type="ECO:0000255" key="1"/>
<evidence type="ECO:0000269" key="2">
    <source>
    </source>
</evidence>
<evidence type="ECO:0000269" key="3">
    <source>
    </source>
</evidence>
<evidence type="ECO:0000303" key="4">
    <source>
    </source>
</evidence>
<evidence type="ECO:0000303" key="5">
    <source>
    </source>
</evidence>
<evidence type="ECO:0000305" key="6"/>
<evidence type="ECO:0000305" key="7">
    <source>
    </source>
</evidence>
<evidence type="ECO:0000305" key="8">
    <source>
    </source>
</evidence>
<organism>
    <name type="scientific">Mesobuthus eupeus</name>
    <name type="common">Lesser Asian scorpion</name>
    <name type="synonym">Buthus eupeus</name>
    <dbReference type="NCBI Taxonomy" id="34648"/>
    <lineage>
        <taxon>Eukaryota</taxon>
        <taxon>Metazoa</taxon>
        <taxon>Ecdysozoa</taxon>
        <taxon>Arthropoda</taxon>
        <taxon>Chelicerata</taxon>
        <taxon>Arachnida</taxon>
        <taxon>Scorpiones</taxon>
        <taxon>Buthida</taxon>
        <taxon>Buthoidea</taxon>
        <taxon>Buthidae</taxon>
        <taxon>Mesobuthus</taxon>
    </lineage>
</organism>
<comment type="function">
    <text evidence="2 3">Amphipathic peptide that exhibits extensive cytolytic activities against both prokaryotic and eukaryotic cells (PubMed:19088182). Acts by fastly disrupting the bacterial membrane (PubMed:29896190). Is more potent against Gram-positive bacteria than against Gram-negative bacteria, and fungi (LC=25.1-8.3 uM) (PubMed:19088182, PubMed:29896190). Shows potent activity against penicillin (MIC=3.0 uM) and methicillin (MIC=1.5-3.0 uM) resistant bacteria (PubMed:29896190). Is lethal to the fungus Beauveria sp (LC=1.9 uM), a highly lethal pathogenic fungus to insects and resistant to many AMPs. Shows hemolytic activity against rabbit erythrocytes (37.7% of inhibition at 6.25 uM) and cytolysis against rat dorsal root ganglions (PubMed:19088182). May act by disrupting the integrity of the bacterial cell membrane (PubMed:19088182). Antibiotic activity is not affected by major negatively charged components of the prokaryotic cell wall (e.g. lipopolysaccharides and lipoteichoic acid) (PubMed:29896190). In vivo, intravenous injection into mice tail provokes uncomfortable symptoms with a death rate of 12.5% (PubMed:19088182). In vivo, in a mouse model of lethal peritonitis, shows potent antibiotic activity without cytotoxicity, improving the survival rate (PubMed:29896190).</text>
</comment>
<comment type="subcellular location">
    <subcellularLocation>
        <location evidence="7">Secreted</location>
    </subcellularLocation>
    <subcellularLocation>
        <location evidence="6">Target cell membrane</location>
    </subcellularLocation>
</comment>
<comment type="tissue specificity">
    <text evidence="7">Expressed by the venom gland.</text>
</comment>
<comment type="domain">
    <text evidence="8">Amphipathic and cationic peptide with an alpha-helical structure.</text>
</comment>
<comment type="similarity">
    <text evidence="6">Belongs to the non-disulfide-bridged peptide (NDBP) superfamily. Medium-length antimicrobial peptide (group 3) family.</text>
</comment>
<name>NDBW_MESEU</name>
<proteinExistence type="evidence at protein level"/>
<reference key="1">
    <citation type="journal article" date="2009" name="FASEB J.">
        <title>Structural and functional characterization of two genetically related meucin peptides highlights evolutionary divergence and convergence in antimicrobial peptides.</title>
        <authorList>
            <person name="Gao B."/>
            <person name="Sherman P."/>
            <person name="Luo L."/>
            <person name="Bowie J."/>
            <person name="Zhu S."/>
        </authorList>
    </citation>
    <scope>NUCLEOTIDE SEQUENCE [MRNA]</scope>
    <scope>FUNCTION</scope>
    <scope>BIOASSAY</scope>
    <scope>CIRCULAR DICHROISM ANALYSIS</scope>
    <scope>STRUCTURE BY NMR OF 17-34</scope>
    <source>
        <tissue>Venom gland</tissue>
    </source>
</reference>
<reference key="2">
    <citation type="journal article" date="2018" name="Front. Microbiol.">
        <title>Therapeutic potential of a scorpion venom-derived antimicrobial peptide and its homologs against antibiotic-resistant Gram-positive bacteria.</title>
        <authorList>
            <person name="Liu G."/>
            <person name="Yang F."/>
            <person name="Li F."/>
            <person name="Li Z."/>
            <person name="Lang Y."/>
            <person name="Shen B."/>
            <person name="Wu Y."/>
            <person name="Li W."/>
            <person name="Harrison P.L."/>
            <person name="Strong P.N."/>
            <person name="Xie Y."/>
            <person name="Miller K."/>
            <person name="Cao Z."/>
        </authorList>
    </citation>
    <scope>FUNCTION</scope>
    <scope>BIOASSAY</scope>
    <scope>SYNTHESIS OF 17-34</scope>
    <scope>CIRCULAR DICHROISM ANALYSIS</scope>
</reference>
<sequence length="69" mass="8400">MVIFLAYFLVVNESEAFFGHLFKLATKIIPSLFQRKKERSVMNRDLENLFDPYQRNLEMDRLLKQLRNY</sequence>